<evidence type="ECO:0000255" key="1">
    <source>
        <dbReference type="HAMAP-Rule" id="MF_00463"/>
    </source>
</evidence>
<sequence length="187" mass="19774">MTHILFAVLVLALLALAFGIILGFAAVKFYVEADPIVDQLDALLPQTQCGQCGYPGCKPYAEALANGDQINKCVPGGDATMRKIADLMGVDPQPLGSAEAAIPVKKVAFIHEDQCIGCTKCIQACPVDAIVGATKAMHTVITDECTGCDLCVDPCPTDCIEMIPVPTTVDNWKWDLASVAIPVKIVE</sequence>
<organism>
    <name type="scientific">Aeromonas salmonicida (strain A449)</name>
    <dbReference type="NCBI Taxonomy" id="382245"/>
    <lineage>
        <taxon>Bacteria</taxon>
        <taxon>Pseudomonadati</taxon>
        <taxon>Pseudomonadota</taxon>
        <taxon>Gammaproteobacteria</taxon>
        <taxon>Aeromonadales</taxon>
        <taxon>Aeromonadaceae</taxon>
        <taxon>Aeromonas</taxon>
    </lineage>
</organism>
<gene>
    <name evidence="1" type="primary">rnfB</name>
    <name type="ordered locus">ASA_2486</name>
</gene>
<comment type="function">
    <text evidence="1">Part of a membrane-bound complex that couples electron transfer with translocation of ions across the membrane.</text>
</comment>
<comment type="cofactor">
    <cofactor evidence="1">
        <name>[4Fe-4S] cluster</name>
        <dbReference type="ChEBI" id="CHEBI:49883"/>
    </cofactor>
    <text evidence="1">Binds 3 [4Fe-4S] clusters.</text>
</comment>
<comment type="subunit">
    <text evidence="1">The complex is composed of six subunits: RnfA, RnfB, RnfC, RnfD, RnfE and RnfG.</text>
</comment>
<comment type="subcellular location">
    <subcellularLocation>
        <location evidence="1">Cell inner membrane</location>
    </subcellularLocation>
</comment>
<comment type="similarity">
    <text evidence="1">Belongs to the 4Fe4S bacterial-type ferredoxin family. RnfB subfamily.</text>
</comment>
<feature type="chain" id="PRO_1000013634" description="Ion-translocating oxidoreductase complex subunit B">
    <location>
        <begin position="1"/>
        <end position="187"/>
    </location>
</feature>
<feature type="domain" description="4Fe-4S" evidence="1">
    <location>
        <begin position="32"/>
        <end position="90"/>
    </location>
</feature>
<feature type="domain" description="4Fe-4S ferredoxin-type 1" evidence="1">
    <location>
        <begin position="106"/>
        <end position="135"/>
    </location>
</feature>
<feature type="domain" description="4Fe-4S ferredoxin-type 2" evidence="1">
    <location>
        <begin position="136"/>
        <end position="165"/>
    </location>
</feature>
<feature type="region of interest" description="Hydrophobic" evidence="1">
    <location>
        <begin position="1"/>
        <end position="26"/>
    </location>
</feature>
<feature type="binding site" evidence="1">
    <location>
        <position position="49"/>
    </location>
    <ligand>
        <name>[4Fe-4S] cluster</name>
        <dbReference type="ChEBI" id="CHEBI:49883"/>
        <label>1</label>
    </ligand>
</feature>
<feature type="binding site" evidence="1">
    <location>
        <position position="52"/>
    </location>
    <ligand>
        <name>[4Fe-4S] cluster</name>
        <dbReference type="ChEBI" id="CHEBI:49883"/>
        <label>1</label>
    </ligand>
</feature>
<feature type="binding site" evidence="1">
    <location>
        <position position="57"/>
    </location>
    <ligand>
        <name>[4Fe-4S] cluster</name>
        <dbReference type="ChEBI" id="CHEBI:49883"/>
        <label>1</label>
    </ligand>
</feature>
<feature type="binding site" evidence="1">
    <location>
        <position position="73"/>
    </location>
    <ligand>
        <name>[4Fe-4S] cluster</name>
        <dbReference type="ChEBI" id="CHEBI:49883"/>
        <label>1</label>
    </ligand>
</feature>
<feature type="binding site" evidence="1">
    <location>
        <position position="115"/>
    </location>
    <ligand>
        <name>[4Fe-4S] cluster</name>
        <dbReference type="ChEBI" id="CHEBI:49883"/>
        <label>2</label>
    </ligand>
</feature>
<feature type="binding site" evidence="1">
    <location>
        <position position="118"/>
    </location>
    <ligand>
        <name>[4Fe-4S] cluster</name>
        <dbReference type="ChEBI" id="CHEBI:49883"/>
        <label>2</label>
    </ligand>
</feature>
<feature type="binding site" evidence="1">
    <location>
        <position position="121"/>
    </location>
    <ligand>
        <name>[4Fe-4S] cluster</name>
        <dbReference type="ChEBI" id="CHEBI:49883"/>
        <label>2</label>
    </ligand>
</feature>
<feature type="binding site" evidence="1">
    <location>
        <position position="125"/>
    </location>
    <ligand>
        <name>[4Fe-4S] cluster</name>
        <dbReference type="ChEBI" id="CHEBI:49883"/>
        <label>3</label>
    </ligand>
</feature>
<feature type="binding site" evidence="1">
    <location>
        <position position="145"/>
    </location>
    <ligand>
        <name>[4Fe-4S] cluster</name>
        <dbReference type="ChEBI" id="CHEBI:49883"/>
        <label>3</label>
    </ligand>
</feature>
<feature type="binding site" evidence="1">
    <location>
        <position position="148"/>
    </location>
    <ligand>
        <name>[4Fe-4S] cluster</name>
        <dbReference type="ChEBI" id="CHEBI:49883"/>
        <label>3</label>
    </ligand>
</feature>
<feature type="binding site" evidence="1">
    <location>
        <position position="151"/>
    </location>
    <ligand>
        <name>[4Fe-4S] cluster</name>
        <dbReference type="ChEBI" id="CHEBI:49883"/>
        <label>3</label>
    </ligand>
</feature>
<feature type="binding site" evidence="1">
    <location>
        <position position="155"/>
    </location>
    <ligand>
        <name>[4Fe-4S] cluster</name>
        <dbReference type="ChEBI" id="CHEBI:49883"/>
        <label>2</label>
    </ligand>
</feature>
<reference key="1">
    <citation type="journal article" date="2008" name="BMC Genomics">
        <title>The genome of Aeromonas salmonicida subsp. salmonicida A449: insights into the evolution of a fish pathogen.</title>
        <authorList>
            <person name="Reith M.E."/>
            <person name="Singh R.K."/>
            <person name="Curtis B."/>
            <person name="Boyd J.M."/>
            <person name="Bouevitch A."/>
            <person name="Kimball J."/>
            <person name="Munholland J."/>
            <person name="Murphy C."/>
            <person name="Sarty D."/>
            <person name="Williams J."/>
            <person name="Nash J.H."/>
            <person name="Johnson S.C."/>
            <person name="Brown L.L."/>
        </authorList>
    </citation>
    <scope>NUCLEOTIDE SEQUENCE [LARGE SCALE GENOMIC DNA]</scope>
    <source>
        <strain>A449</strain>
    </source>
</reference>
<protein>
    <recommendedName>
        <fullName evidence="1">Ion-translocating oxidoreductase complex subunit B</fullName>
        <ecNumber evidence="1">7.-.-.-</ecNumber>
    </recommendedName>
    <alternativeName>
        <fullName evidence="1">Rnf electron transport complex subunit B</fullName>
    </alternativeName>
</protein>
<dbReference type="EC" id="7.-.-.-" evidence="1"/>
<dbReference type="EMBL" id="CP000644">
    <property type="protein sequence ID" value="ABO90518.1"/>
    <property type="molecule type" value="Genomic_DNA"/>
</dbReference>
<dbReference type="STRING" id="29491.GCA_000820065_00631"/>
<dbReference type="KEGG" id="asa:ASA_2486"/>
<dbReference type="PATRIC" id="fig|382245.13.peg.2449"/>
<dbReference type="eggNOG" id="COG2878">
    <property type="taxonomic scope" value="Bacteria"/>
</dbReference>
<dbReference type="HOGENOM" id="CLU_063448_2_0_6"/>
<dbReference type="Proteomes" id="UP000000225">
    <property type="component" value="Chromosome"/>
</dbReference>
<dbReference type="GO" id="GO:0005886">
    <property type="term" value="C:plasma membrane"/>
    <property type="evidence" value="ECO:0007669"/>
    <property type="project" value="UniProtKB-SubCell"/>
</dbReference>
<dbReference type="GO" id="GO:0051539">
    <property type="term" value="F:4 iron, 4 sulfur cluster binding"/>
    <property type="evidence" value="ECO:0007669"/>
    <property type="project" value="UniProtKB-UniRule"/>
</dbReference>
<dbReference type="GO" id="GO:0009055">
    <property type="term" value="F:electron transfer activity"/>
    <property type="evidence" value="ECO:0007669"/>
    <property type="project" value="InterPro"/>
</dbReference>
<dbReference type="GO" id="GO:0046872">
    <property type="term" value="F:metal ion binding"/>
    <property type="evidence" value="ECO:0007669"/>
    <property type="project" value="UniProtKB-KW"/>
</dbReference>
<dbReference type="GO" id="GO:0022900">
    <property type="term" value="P:electron transport chain"/>
    <property type="evidence" value="ECO:0007669"/>
    <property type="project" value="UniProtKB-UniRule"/>
</dbReference>
<dbReference type="FunFam" id="1.10.15.40:FF:000001">
    <property type="entry name" value="Ion-translocating oxidoreductase complex subunit B"/>
    <property type="match status" value="1"/>
</dbReference>
<dbReference type="Gene3D" id="3.30.70.20">
    <property type="match status" value="1"/>
</dbReference>
<dbReference type="Gene3D" id="1.10.15.40">
    <property type="entry name" value="Electron transport complex subunit B, putative Fe-S cluster"/>
    <property type="match status" value="1"/>
</dbReference>
<dbReference type="HAMAP" id="MF_00463">
    <property type="entry name" value="RsxB_RnfB"/>
    <property type="match status" value="1"/>
</dbReference>
<dbReference type="InterPro" id="IPR007202">
    <property type="entry name" value="4Fe-4S_dom"/>
</dbReference>
<dbReference type="InterPro" id="IPR017896">
    <property type="entry name" value="4Fe4S_Fe-S-bd"/>
</dbReference>
<dbReference type="InterPro" id="IPR017900">
    <property type="entry name" value="4Fe4S_Fe_S_CS"/>
</dbReference>
<dbReference type="InterPro" id="IPR010207">
    <property type="entry name" value="Elect_transpt_cplx_RnfB/RsxB"/>
</dbReference>
<dbReference type="InterPro" id="IPR016463">
    <property type="entry name" value="RnfB/RsxB_Proteobac"/>
</dbReference>
<dbReference type="InterPro" id="IPR050294">
    <property type="entry name" value="RnfB_subfamily"/>
</dbReference>
<dbReference type="NCBIfam" id="NF003475">
    <property type="entry name" value="PRK05113.1"/>
    <property type="match status" value="1"/>
</dbReference>
<dbReference type="NCBIfam" id="TIGR01944">
    <property type="entry name" value="rnfB"/>
    <property type="match status" value="1"/>
</dbReference>
<dbReference type="PANTHER" id="PTHR42859:SF3">
    <property type="entry name" value="ION-TRANSLOCATING OXIDOREDUCTASE COMPLEX SUBUNIT B"/>
    <property type="match status" value="1"/>
</dbReference>
<dbReference type="PANTHER" id="PTHR42859">
    <property type="entry name" value="OXIDOREDUCTASE"/>
    <property type="match status" value="1"/>
</dbReference>
<dbReference type="Pfam" id="PF14697">
    <property type="entry name" value="Fer4_21"/>
    <property type="match status" value="1"/>
</dbReference>
<dbReference type="Pfam" id="PF04060">
    <property type="entry name" value="FeS"/>
    <property type="match status" value="1"/>
</dbReference>
<dbReference type="PIRSF" id="PIRSF005784">
    <property type="entry name" value="Elect_transpt_RnfB"/>
    <property type="match status" value="1"/>
</dbReference>
<dbReference type="SUPFAM" id="SSF54862">
    <property type="entry name" value="4Fe-4S ferredoxins"/>
    <property type="match status" value="1"/>
</dbReference>
<dbReference type="PROSITE" id="PS51656">
    <property type="entry name" value="4FE4S"/>
    <property type="match status" value="1"/>
</dbReference>
<dbReference type="PROSITE" id="PS00198">
    <property type="entry name" value="4FE4S_FER_1"/>
    <property type="match status" value="2"/>
</dbReference>
<dbReference type="PROSITE" id="PS51379">
    <property type="entry name" value="4FE4S_FER_2"/>
    <property type="match status" value="2"/>
</dbReference>
<keyword id="KW-0004">4Fe-4S</keyword>
<keyword id="KW-0997">Cell inner membrane</keyword>
<keyword id="KW-1003">Cell membrane</keyword>
<keyword id="KW-0249">Electron transport</keyword>
<keyword id="KW-0408">Iron</keyword>
<keyword id="KW-0411">Iron-sulfur</keyword>
<keyword id="KW-0472">Membrane</keyword>
<keyword id="KW-0479">Metal-binding</keyword>
<keyword id="KW-0677">Repeat</keyword>
<keyword id="KW-1278">Translocase</keyword>
<keyword id="KW-0813">Transport</keyword>
<name>RNFB_AERS4</name>
<accession>A4SNP6</accession>
<proteinExistence type="inferred from homology"/>